<gene>
    <name evidence="1" type="primary">GUF1</name>
    <name type="ORF">BDBG_05196</name>
</gene>
<feature type="transit peptide" description="Mitochondrion" evidence="1">
    <location>
        <begin position="1"/>
        <end position="39"/>
    </location>
</feature>
<feature type="chain" id="PRO_0000402870" description="Translation factor GUF1, mitochondrial">
    <location>
        <begin position="40"/>
        <end position="657"/>
    </location>
</feature>
<feature type="domain" description="tr-type G">
    <location>
        <begin position="59"/>
        <end position="239"/>
    </location>
</feature>
<feature type="binding site" evidence="1">
    <location>
        <begin position="68"/>
        <end position="75"/>
    </location>
    <ligand>
        <name>GTP</name>
        <dbReference type="ChEBI" id="CHEBI:37565"/>
    </ligand>
</feature>
<feature type="binding site" evidence="1">
    <location>
        <begin position="132"/>
        <end position="136"/>
    </location>
    <ligand>
        <name>GTP</name>
        <dbReference type="ChEBI" id="CHEBI:37565"/>
    </ligand>
</feature>
<feature type="binding site" evidence="1">
    <location>
        <begin position="186"/>
        <end position="189"/>
    </location>
    <ligand>
        <name>GTP</name>
        <dbReference type="ChEBI" id="CHEBI:37565"/>
    </ligand>
</feature>
<reference key="1">
    <citation type="journal article" date="2015" name="PLoS Genet.">
        <title>The dynamic genome and transcriptome of the human fungal pathogen Blastomyces and close relative Emmonsia.</title>
        <authorList>
            <person name="Munoz J.F."/>
            <person name="Gauthier G.M."/>
            <person name="Desjardins C.A."/>
            <person name="Gallo J.E."/>
            <person name="Holder J."/>
            <person name="Sullivan T.D."/>
            <person name="Marty A.J."/>
            <person name="Carmen J.C."/>
            <person name="Chen Z."/>
            <person name="Ding L."/>
            <person name="Gujja S."/>
            <person name="Magrini V."/>
            <person name="Misas E."/>
            <person name="Mitreva M."/>
            <person name="Priest M."/>
            <person name="Saif S."/>
            <person name="Whiston E.A."/>
            <person name="Young S."/>
            <person name="Zeng Q."/>
            <person name="Goldman W.E."/>
            <person name="Mardis E.R."/>
            <person name="Taylor J.W."/>
            <person name="McEwen J.G."/>
            <person name="Clay O.K."/>
            <person name="Klein B.S."/>
            <person name="Cuomo C.A."/>
        </authorList>
    </citation>
    <scope>NUCLEOTIDE SEQUENCE [LARGE SCALE GENOMIC DNA]</scope>
    <source>
        <strain>SLH14081</strain>
    </source>
</reference>
<organism>
    <name type="scientific">Blastomyces gilchristii (strain SLH14081)</name>
    <name type="common">Blastomyces dermatitidis</name>
    <dbReference type="NCBI Taxonomy" id="559298"/>
    <lineage>
        <taxon>Eukaryota</taxon>
        <taxon>Fungi</taxon>
        <taxon>Dikarya</taxon>
        <taxon>Ascomycota</taxon>
        <taxon>Pezizomycotina</taxon>
        <taxon>Eurotiomycetes</taxon>
        <taxon>Eurotiomycetidae</taxon>
        <taxon>Onygenales</taxon>
        <taxon>Ajellomycetaceae</taxon>
        <taxon>Blastomyces</taxon>
    </lineage>
</organism>
<sequence length="657" mass="73415">MRGCLQSVKWLTSAVRQSQSLTSSTRFPRRLFNTSTLHYAQGRKPVSELEQRIAAIPIERFRNFCIVAHVDHGKSTLSDRLLELTGTIEAGANKQVLDKLDVERERGITVKAQTCSMLYNHQGEDYLLHLVDTPGHVDFRAEVSRSYASCGGALLLVDASQGIQAQTVANFYLAFAEGLKLVPVINKVDLPSADPERALDQMKNTFELDPKSAVLVSAKTGLNVEQLLPTVIEQVPAPVGDHTKPLRMLLVDSWYSTYKGVILLVRIFDGEVRAGDQVVSFATGLKYFVGEVGIMYPGQTAQSVLRAGQVGYIYFNPAMKRSQEAKVGDTYTKVGSEKLVQPLPGFEEPKAMVFVAAYPVDASDFPHLEDSINQLTLNDRSVTLQKESSEALGAGFRLGFLGTLHCSVFEDRLRQEHGASIIITPPTVPFKVIWKDGKEEIVTNPALFPEEETLRAKVAELQEPFVLATLTFPEEYLGRVIELCESNRGEQKNLEFFTSTQVILKYELPLAQLVDDFFGKLKGSTKGYASLDYEESGWRRSNISKLQLLVNKVPVDAVSRVVHASQVQRLGRLWVSKFKEHVDRQMFEIVIQAAVGRNVVARESIKPFRKDVLQKLHASDITRRKKLLEKQKEGRKRLKAVGNVVIEHKAFQAFLAK</sequence>
<protein>
    <recommendedName>
        <fullName evidence="1">Translation factor GUF1, mitochondrial</fullName>
        <ecNumber>3.6.5.-</ecNumber>
    </recommendedName>
    <alternativeName>
        <fullName evidence="1">Elongation factor 4 homolog</fullName>
        <shortName evidence="1">EF-4</shortName>
    </alternativeName>
    <alternativeName>
        <fullName evidence="1">GTPase GUF1</fullName>
    </alternativeName>
    <alternativeName>
        <fullName evidence="1">Ribosomal back-translocase</fullName>
    </alternativeName>
</protein>
<keyword id="KW-0342">GTP-binding</keyword>
<keyword id="KW-0378">Hydrolase</keyword>
<keyword id="KW-0472">Membrane</keyword>
<keyword id="KW-0496">Mitochondrion</keyword>
<keyword id="KW-0999">Mitochondrion inner membrane</keyword>
<keyword id="KW-0547">Nucleotide-binding</keyword>
<keyword id="KW-0648">Protein biosynthesis</keyword>
<keyword id="KW-1185">Reference proteome</keyword>
<keyword id="KW-0809">Transit peptide</keyword>
<accession>C5JRK2</accession>
<accession>A0A179UMU3</accession>
<proteinExistence type="inferred from homology"/>
<evidence type="ECO:0000255" key="1">
    <source>
        <dbReference type="HAMAP-Rule" id="MF_03137"/>
    </source>
</evidence>
<evidence type="ECO:0000305" key="2"/>
<dbReference type="EC" id="3.6.5.-"/>
<dbReference type="EMBL" id="GG657457">
    <property type="protein sequence ID" value="OAT09406.1"/>
    <property type="molecule type" value="Genomic_DNA"/>
</dbReference>
<dbReference type="RefSeq" id="XP_002624427.1">
    <property type="nucleotide sequence ID" value="XM_002624381.1"/>
</dbReference>
<dbReference type="SMR" id="C5JRK2"/>
<dbReference type="STRING" id="559298.C5JRK2"/>
<dbReference type="GeneID" id="8509477"/>
<dbReference type="KEGG" id="bgh:BDBG_05196"/>
<dbReference type="VEuPathDB" id="FungiDB:BDBG_05196"/>
<dbReference type="HOGENOM" id="CLU_009995_3_1_1"/>
<dbReference type="OrthoDB" id="1074at2759"/>
<dbReference type="Proteomes" id="UP000002038">
    <property type="component" value="Unassembled WGS sequence"/>
</dbReference>
<dbReference type="GO" id="GO:0005743">
    <property type="term" value="C:mitochondrial inner membrane"/>
    <property type="evidence" value="ECO:0007669"/>
    <property type="project" value="UniProtKB-SubCell"/>
</dbReference>
<dbReference type="GO" id="GO:0005759">
    <property type="term" value="C:mitochondrial matrix"/>
    <property type="evidence" value="ECO:0007669"/>
    <property type="project" value="UniProtKB-UniRule"/>
</dbReference>
<dbReference type="GO" id="GO:0005525">
    <property type="term" value="F:GTP binding"/>
    <property type="evidence" value="ECO:0007669"/>
    <property type="project" value="UniProtKB-UniRule"/>
</dbReference>
<dbReference type="GO" id="GO:0003924">
    <property type="term" value="F:GTPase activity"/>
    <property type="evidence" value="ECO:0007669"/>
    <property type="project" value="UniProtKB-UniRule"/>
</dbReference>
<dbReference type="GO" id="GO:0097177">
    <property type="term" value="F:mitochondrial ribosome binding"/>
    <property type="evidence" value="ECO:0007669"/>
    <property type="project" value="TreeGrafter"/>
</dbReference>
<dbReference type="GO" id="GO:0045727">
    <property type="term" value="P:positive regulation of translation"/>
    <property type="evidence" value="ECO:0007669"/>
    <property type="project" value="UniProtKB-UniRule"/>
</dbReference>
<dbReference type="GO" id="GO:0006412">
    <property type="term" value="P:translation"/>
    <property type="evidence" value="ECO:0007669"/>
    <property type="project" value="UniProtKB-KW"/>
</dbReference>
<dbReference type="CDD" id="cd03699">
    <property type="entry name" value="EF4_II"/>
    <property type="match status" value="1"/>
</dbReference>
<dbReference type="CDD" id="cd16260">
    <property type="entry name" value="EF4_III"/>
    <property type="match status" value="1"/>
</dbReference>
<dbReference type="CDD" id="cd01890">
    <property type="entry name" value="LepA"/>
    <property type="match status" value="1"/>
</dbReference>
<dbReference type="CDD" id="cd03709">
    <property type="entry name" value="lepA_C"/>
    <property type="match status" value="1"/>
</dbReference>
<dbReference type="FunFam" id="3.40.50.300:FF:000078">
    <property type="entry name" value="Elongation factor 4"/>
    <property type="match status" value="1"/>
</dbReference>
<dbReference type="FunFam" id="2.40.30.10:FF:000015">
    <property type="entry name" value="Translation factor GUF1, mitochondrial"/>
    <property type="match status" value="1"/>
</dbReference>
<dbReference type="FunFam" id="3.30.70.240:FF:000007">
    <property type="entry name" value="Translation factor GUF1, mitochondrial"/>
    <property type="match status" value="1"/>
</dbReference>
<dbReference type="FunFam" id="3.30.70.2570:FF:000001">
    <property type="entry name" value="Translation factor GUF1, mitochondrial"/>
    <property type="match status" value="1"/>
</dbReference>
<dbReference type="FunFam" id="3.30.70.870:FF:000004">
    <property type="entry name" value="Translation factor GUF1, mitochondrial"/>
    <property type="match status" value="1"/>
</dbReference>
<dbReference type="Gene3D" id="3.30.70.240">
    <property type="match status" value="1"/>
</dbReference>
<dbReference type="Gene3D" id="3.30.70.2570">
    <property type="entry name" value="Elongation factor 4, C-terminal domain"/>
    <property type="match status" value="1"/>
</dbReference>
<dbReference type="Gene3D" id="3.30.70.870">
    <property type="entry name" value="Elongation Factor G (Translational Gtpase), domain 3"/>
    <property type="match status" value="1"/>
</dbReference>
<dbReference type="Gene3D" id="3.40.50.300">
    <property type="entry name" value="P-loop containing nucleotide triphosphate hydrolases"/>
    <property type="match status" value="1"/>
</dbReference>
<dbReference type="Gene3D" id="2.40.30.10">
    <property type="entry name" value="Translation factors"/>
    <property type="match status" value="1"/>
</dbReference>
<dbReference type="HAMAP" id="MF_00071">
    <property type="entry name" value="LepA"/>
    <property type="match status" value="1"/>
</dbReference>
<dbReference type="InterPro" id="IPR006297">
    <property type="entry name" value="EF-4"/>
</dbReference>
<dbReference type="InterPro" id="IPR035647">
    <property type="entry name" value="EFG_III/V"/>
</dbReference>
<dbReference type="InterPro" id="IPR000640">
    <property type="entry name" value="EFG_V-like"/>
</dbReference>
<dbReference type="InterPro" id="IPR031157">
    <property type="entry name" value="G_TR_CS"/>
</dbReference>
<dbReference type="InterPro" id="IPR038363">
    <property type="entry name" value="LepA_C_sf"/>
</dbReference>
<dbReference type="InterPro" id="IPR013842">
    <property type="entry name" value="LepA_CTD"/>
</dbReference>
<dbReference type="InterPro" id="IPR035654">
    <property type="entry name" value="LepA_IV"/>
</dbReference>
<dbReference type="InterPro" id="IPR027417">
    <property type="entry name" value="P-loop_NTPase"/>
</dbReference>
<dbReference type="InterPro" id="IPR005225">
    <property type="entry name" value="Small_GTP-bd"/>
</dbReference>
<dbReference type="InterPro" id="IPR000795">
    <property type="entry name" value="T_Tr_GTP-bd_dom"/>
</dbReference>
<dbReference type="InterPro" id="IPR009000">
    <property type="entry name" value="Transl_B-barrel_sf"/>
</dbReference>
<dbReference type="NCBIfam" id="TIGR01393">
    <property type="entry name" value="lepA"/>
    <property type="match status" value="1"/>
</dbReference>
<dbReference type="NCBIfam" id="TIGR00231">
    <property type="entry name" value="small_GTP"/>
    <property type="match status" value="1"/>
</dbReference>
<dbReference type="PANTHER" id="PTHR43512:SF7">
    <property type="entry name" value="TRANSLATION FACTOR GUF1, MITOCHONDRIAL"/>
    <property type="match status" value="1"/>
</dbReference>
<dbReference type="PANTHER" id="PTHR43512">
    <property type="entry name" value="TRANSLATION FACTOR GUF1-RELATED"/>
    <property type="match status" value="1"/>
</dbReference>
<dbReference type="Pfam" id="PF00679">
    <property type="entry name" value="EFG_C"/>
    <property type="match status" value="1"/>
</dbReference>
<dbReference type="Pfam" id="PF00009">
    <property type="entry name" value="GTP_EFTU"/>
    <property type="match status" value="1"/>
</dbReference>
<dbReference type="Pfam" id="PF06421">
    <property type="entry name" value="LepA_C"/>
    <property type="match status" value="1"/>
</dbReference>
<dbReference type="PRINTS" id="PR00315">
    <property type="entry name" value="ELONGATNFCT"/>
</dbReference>
<dbReference type="SUPFAM" id="SSF54980">
    <property type="entry name" value="EF-G C-terminal domain-like"/>
    <property type="match status" value="2"/>
</dbReference>
<dbReference type="SUPFAM" id="SSF52540">
    <property type="entry name" value="P-loop containing nucleoside triphosphate hydrolases"/>
    <property type="match status" value="1"/>
</dbReference>
<dbReference type="SUPFAM" id="SSF50447">
    <property type="entry name" value="Translation proteins"/>
    <property type="match status" value="1"/>
</dbReference>
<dbReference type="PROSITE" id="PS00301">
    <property type="entry name" value="G_TR_1"/>
    <property type="match status" value="1"/>
</dbReference>
<dbReference type="PROSITE" id="PS51722">
    <property type="entry name" value="G_TR_2"/>
    <property type="match status" value="1"/>
</dbReference>
<comment type="function">
    <text evidence="1">Promotes mitochondrial protein synthesis. May act as a fidelity factor of the translation reaction, by catalyzing a one-codon backward translocation of tRNAs on improperly translocated ribosomes. Binds to mitochondrial ribosomes in a GTP-dependent manner.</text>
</comment>
<comment type="catalytic activity">
    <reaction evidence="1">
        <text>GTP + H2O = GDP + phosphate + H(+)</text>
        <dbReference type="Rhea" id="RHEA:19669"/>
        <dbReference type="ChEBI" id="CHEBI:15377"/>
        <dbReference type="ChEBI" id="CHEBI:15378"/>
        <dbReference type="ChEBI" id="CHEBI:37565"/>
        <dbReference type="ChEBI" id="CHEBI:43474"/>
        <dbReference type="ChEBI" id="CHEBI:58189"/>
    </reaction>
</comment>
<comment type="subcellular location">
    <subcellularLocation>
        <location evidence="1">Mitochondrion inner membrane</location>
        <topology evidence="1">Peripheral membrane protein</topology>
        <orientation evidence="1">Matrix side</orientation>
    </subcellularLocation>
</comment>
<comment type="similarity">
    <text evidence="2">Belongs to the TRAFAC class translation factor GTPase superfamily. Classic translation factor GTPase family. LepA subfamily.</text>
</comment>
<name>GUF1_BLAGS</name>